<dbReference type="EC" id="2.8.1.6" evidence="1"/>
<dbReference type="EMBL" id="CP001111">
    <property type="protein sequence ID" value="ACF53526.1"/>
    <property type="molecule type" value="Genomic_DNA"/>
</dbReference>
<dbReference type="RefSeq" id="WP_006400133.1">
    <property type="nucleotide sequence ID" value="NC_011071.1"/>
</dbReference>
<dbReference type="SMR" id="B4SM81"/>
<dbReference type="STRING" id="391008.Smal_3827"/>
<dbReference type="KEGG" id="smt:Smal_3827"/>
<dbReference type="eggNOG" id="COG0502">
    <property type="taxonomic scope" value="Bacteria"/>
</dbReference>
<dbReference type="HOGENOM" id="CLU_033172_1_2_6"/>
<dbReference type="OrthoDB" id="9786826at2"/>
<dbReference type="UniPathway" id="UPA00078">
    <property type="reaction ID" value="UER00162"/>
</dbReference>
<dbReference type="Proteomes" id="UP000001867">
    <property type="component" value="Chromosome"/>
</dbReference>
<dbReference type="GO" id="GO:0051537">
    <property type="term" value="F:2 iron, 2 sulfur cluster binding"/>
    <property type="evidence" value="ECO:0007669"/>
    <property type="project" value="UniProtKB-KW"/>
</dbReference>
<dbReference type="GO" id="GO:0051539">
    <property type="term" value="F:4 iron, 4 sulfur cluster binding"/>
    <property type="evidence" value="ECO:0007669"/>
    <property type="project" value="UniProtKB-KW"/>
</dbReference>
<dbReference type="GO" id="GO:0004076">
    <property type="term" value="F:biotin synthase activity"/>
    <property type="evidence" value="ECO:0007669"/>
    <property type="project" value="UniProtKB-UniRule"/>
</dbReference>
<dbReference type="GO" id="GO:0005506">
    <property type="term" value="F:iron ion binding"/>
    <property type="evidence" value="ECO:0007669"/>
    <property type="project" value="UniProtKB-UniRule"/>
</dbReference>
<dbReference type="GO" id="GO:0009102">
    <property type="term" value="P:biotin biosynthetic process"/>
    <property type="evidence" value="ECO:0007669"/>
    <property type="project" value="UniProtKB-UniRule"/>
</dbReference>
<dbReference type="CDD" id="cd01335">
    <property type="entry name" value="Radical_SAM"/>
    <property type="match status" value="1"/>
</dbReference>
<dbReference type="FunFam" id="3.20.20.70:FF:000011">
    <property type="entry name" value="Biotin synthase"/>
    <property type="match status" value="1"/>
</dbReference>
<dbReference type="Gene3D" id="3.20.20.70">
    <property type="entry name" value="Aldolase class I"/>
    <property type="match status" value="1"/>
</dbReference>
<dbReference type="HAMAP" id="MF_01694">
    <property type="entry name" value="BioB"/>
    <property type="match status" value="1"/>
</dbReference>
<dbReference type="InterPro" id="IPR013785">
    <property type="entry name" value="Aldolase_TIM"/>
</dbReference>
<dbReference type="InterPro" id="IPR010722">
    <property type="entry name" value="BATS_dom"/>
</dbReference>
<dbReference type="InterPro" id="IPR002684">
    <property type="entry name" value="Biotin_synth/BioAB"/>
</dbReference>
<dbReference type="InterPro" id="IPR024177">
    <property type="entry name" value="Biotin_synthase"/>
</dbReference>
<dbReference type="InterPro" id="IPR006638">
    <property type="entry name" value="Elp3/MiaA/NifB-like_rSAM"/>
</dbReference>
<dbReference type="InterPro" id="IPR007197">
    <property type="entry name" value="rSAM"/>
</dbReference>
<dbReference type="NCBIfam" id="TIGR00433">
    <property type="entry name" value="bioB"/>
    <property type="match status" value="1"/>
</dbReference>
<dbReference type="PANTHER" id="PTHR22976">
    <property type="entry name" value="BIOTIN SYNTHASE"/>
    <property type="match status" value="1"/>
</dbReference>
<dbReference type="PANTHER" id="PTHR22976:SF2">
    <property type="entry name" value="BIOTIN SYNTHASE, MITOCHONDRIAL"/>
    <property type="match status" value="1"/>
</dbReference>
<dbReference type="Pfam" id="PF06968">
    <property type="entry name" value="BATS"/>
    <property type="match status" value="1"/>
</dbReference>
<dbReference type="Pfam" id="PF04055">
    <property type="entry name" value="Radical_SAM"/>
    <property type="match status" value="1"/>
</dbReference>
<dbReference type="PIRSF" id="PIRSF001619">
    <property type="entry name" value="Biotin_synth"/>
    <property type="match status" value="1"/>
</dbReference>
<dbReference type="SFLD" id="SFLDF00272">
    <property type="entry name" value="biotin_synthase"/>
    <property type="match status" value="1"/>
</dbReference>
<dbReference type="SFLD" id="SFLDS00029">
    <property type="entry name" value="Radical_SAM"/>
    <property type="match status" value="1"/>
</dbReference>
<dbReference type="SMART" id="SM00876">
    <property type="entry name" value="BATS"/>
    <property type="match status" value="1"/>
</dbReference>
<dbReference type="SMART" id="SM00729">
    <property type="entry name" value="Elp3"/>
    <property type="match status" value="1"/>
</dbReference>
<dbReference type="SUPFAM" id="SSF102114">
    <property type="entry name" value="Radical SAM enzymes"/>
    <property type="match status" value="1"/>
</dbReference>
<dbReference type="PROSITE" id="PS51918">
    <property type="entry name" value="RADICAL_SAM"/>
    <property type="match status" value="1"/>
</dbReference>
<proteinExistence type="inferred from homology"/>
<name>BIOB_STRM5</name>
<accession>B4SM81</accession>
<organism>
    <name type="scientific">Stenotrophomonas maltophilia (strain R551-3)</name>
    <dbReference type="NCBI Taxonomy" id="391008"/>
    <lineage>
        <taxon>Bacteria</taxon>
        <taxon>Pseudomonadati</taxon>
        <taxon>Pseudomonadota</taxon>
        <taxon>Gammaproteobacteria</taxon>
        <taxon>Lysobacterales</taxon>
        <taxon>Lysobacteraceae</taxon>
        <taxon>Stenotrophomonas</taxon>
        <taxon>Stenotrophomonas maltophilia group</taxon>
    </lineage>
</organism>
<sequence length="347" mass="37186">MAAAIRHDWQHDELQALFDLPFPELLFRAAAVHREHFDPAQVQVSTLLSVKTGGCPEDCAYCPQAQRYNTGVNAQKLMETDAVLAKARQAKAAGASRFCMGAAWRSPKDRDIPKVAAMIAGVKALGLETCATLGMLSGGQARALKDAGLDYYNHNLDTAPDYYDSIIHTRQYQDRLDTLEHVRDAGLKTCCGGIVGMGETRAQRVGLLLALATLPAHPDSVPINKLVQVAGTPLHGSAELDPFEFVRMIAVARIVMPRSMVRLSAGREAMSDELQALCFVAGANSIFYGDKLLTTGNPESERDLALFARLGLQPMAVQVDAEGHDHGGTVHADISADAPGCGCAHAA</sequence>
<reference key="1">
    <citation type="submission" date="2008-06" db="EMBL/GenBank/DDBJ databases">
        <title>Complete sequence of Stenotrophomonas maltophilia R551-3.</title>
        <authorList>
            <consortium name="US DOE Joint Genome Institute"/>
            <person name="Lucas S."/>
            <person name="Copeland A."/>
            <person name="Lapidus A."/>
            <person name="Glavina del Rio T."/>
            <person name="Dalin E."/>
            <person name="Tice H."/>
            <person name="Pitluck S."/>
            <person name="Chain P."/>
            <person name="Malfatti S."/>
            <person name="Shin M."/>
            <person name="Vergez L."/>
            <person name="Lang D."/>
            <person name="Schmutz J."/>
            <person name="Larimer F."/>
            <person name="Land M."/>
            <person name="Hauser L."/>
            <person name="Kyrpides N."/>
            <person name="Mikhailova N."/>
            <person name="Taghavi S."/>
            <person name="Monchy S."/>
            <person name="Newman L."/>
            <person name="Vangronsveld J."/>
            <person name="van der Lelie D."/>
            <person name="Richardson P."/>
        </authorList>
    </citation>
    <scope>NUCLEOTIDE SEQUENCE [LARGE SCALE GENOMIC DNA]</scope>
    <source>
        <strain>R551-3</strain>
    </source>
</reference>
<keyword id="KW-0001">2Fe-2S</keyword>
<keyword id="KW-0004">4Fe-4S</keyword>
<keyword id="KW-0093">Biotin biosynthesis</keyword>
<keyword id="KW-0408">Iron</keyword>
<keyword id="KW-0411">Iron-sulfur</keyword>
<keyword id="KW-0479">Metal-binding</keyword>
<keyword id="KW-0949">S-adenosyl-L-methionine</keyword>
<keyword id="KW-0808">Transferase</keyword>
<protein>
    <recommendedName>
        <fullName evidence="1">Biotin synthase</fullName>
        <ecNumber evidence="1">2.8.1.6</ecNumber>
    </recommendedName>
</protein>
<gene>
    <name evidence="1" type="primary">bioB</name>
    <name type="ordered locus">Smal_3827</name>
</gene>
<feature type="chain" id="PRO_0000381666" description="Biotin synthase">
    <location>
        <begin position="1"/>
        <end position="347"/>
    </location>
</feature>
<feature type="domain" description="Radical SAM core" evidence="2">
    <location>
        <begin position="40"/>
        <end position="258"/>
    </location>
</feature>
<feature type="binding site" evidence="1">
    <location>
        <position position="55"/>
    </location>
    <ligand>
        <name>[4Fe-4S] cluster</name>
        <dbReference type="ChEBI" id="CHEBI:49883"/>
        <note>4Fe-4S-S-AdoMet</note>
    </ligand>
</feature>
<feature type="binding site" evidence="1">
    <location>
        <position position="59"/>
    </location>
    <ligand>
        <name>[4Fe-4S] cluster</name>
        <dbReference type="ChEBI" id="CHEBI:49883"/>
        <note>4Fe-4S-S-AdoMet</note>
    </ligand>
</feature>
<feature type="binding site" evidence="1">
    <location>
        <position position="62"/>
    </location>
    <ligand>
        <name>[4Fe-4S] cluster</name>
        <dbReference type="ChEBI" id="CHEBI:49883"/>
        <note>4Fe-4S-S-AdoMet</note>
    </ligand>
</feature>
<feature type="binding site" evidence="1">
    <location>
        <position position="99"/>
    </location>
    <ligand>
        <name>[2Fe-2S] cluster</name>
        <dbReference type="ChEBI" id="CHEBI:190135"/>
    </ligand>
</feature>
<feature type="binding site" evidence="1">
    <location>
        <position position="130"/>
    </location>
    <ligand>
        <name>[2Fe-2S] cluster</name>
        <dbReference type="ChEBI" id="CHEBI:190135"/>
    </ligand>
</feature>
<feature type="binding site" evidence="1">
    <location>
        <position position="190"/>
    </location>
    <ligand>
        <name>[2Fe-2S] cluster</name>
        <dbReference type="ChEBI" id="CHEBI:190135"/>
    </ligand>
</feature>
<feature type="binding site" evidence="1">
    <location>
        <position position="262"/>
    </location>
    <ligand>
        <name>[2Fe-2S] cluster</name>
        <dbReference type="ChEBI" id="CHEBI:190135"/>
    </ligand>
</feature>
<evidence type="ECO:0000255" key="1">
    <source>
        <dbReference type="HAMAP-Rule" id="MF_01694"/>
    </source>
</evidence>
<evidence type="ECO:0000255" key="2">
    <source>
        <dbReference type="PROSITE-ProRule" id="PRU01266"/>
    </source>
</evidence>
<comment type="function">
    <text evidence="1">Catalyzes the conversion of dethiobiotin (DTB) to biotin by the insertion of a sulfur atom into dethiobiotin via a radical-based mechanism.</text>
</comment>
<comment type="catalytic activity">
    <reaction evidence="1">
        <text>(4R,5S)-dethiobiotin + (sulfur carrier)-SH + 2 reduced [2Fe-2S]-[ferredoxin] + 2 S-adenosyl-L-methionine = (sulfur carrier)-H + biotin + 2 5'-deoxyadenosine + 2 L-methionine + 2 oxidized [2Fe-2S]-[ferredoxin]</text>
        <dbReference type="Rhea" id="RHEA:22060"/>
        <dbReference type="Rhea" id="RHEA-COMP:10000"/>
        <dbReference type="Rhea" id="RHEA-COMP:10001"/>
        <dbReference type="Rhea" id="RHEA-COMP:14737"/>
        <dbReference type="Rhea" id="RHEA-COMP:14739"/>
        <dbReference type="ChEBI" id="CHEBI:17319"/>
        <dbReference type="ChEBI" id="CHEBI:29917"/>
        <dbReference type="ChEBI" id="CHEBI:33737"/>
        <dbReference type="ChEBI" id="CHEBI:33738"/>
        <dbReference type="ChEBI" id="CHEBI:57586"/>
        <dbReference type="ChEBI" id="CHEBI:57844"/>
        <dbReference type="ChEBI" id="CHEBI:59789"/>
        <dbReference type="ChEBI" id="CHEBI:64428"/>
        <dbReference type="ChEBI" id="CHEBI:149473"/>
        <dbReference type="EC" id="2.8.1.6"/>
    </reaction>
</comment>
<comment type="cofactor">
    <cofactor evidence="1">
        <name>[4Fe-4S] cluster</name>
        <dbReference type="ChEBI" id="CHEBI:49883"/>
    </cofactor>
    <text evidence="1">Binds 1 [4Fe-4S] cluster. The cluster is coordinated with 3 cysteines and an exchangeable S-adenosyl-L-methionine.</text>
</comment>
<comment type="cofactor">
    <cofactor evidence="1">
        <name>[2Fe-2S] cluster</name>
        <dbReference type="ChEBI" id="CHEBI:190135"/>
    </cofactor>
    <text evidence="1">Binds 1 [2Fe-2S] cluster. The cluster is coordinated with 3 cysteines and 1 arginine.</text>
</comment>
<comment type="pathway">
    <text evidence="1">Cofactor biosynthesis; biotin biosynthesis; biotin from 7,8-diaminononanoate: step 2/2.</text>
</comment>
<comment type="subunit">
    <text evidence="1">Homodimer.</text>
</comment>
<comment type="similarity">
    <text evidence="1">Belongs to the radical SAM superfamily. Biotin synthase family.</text>
</comment>